<name>AVPI1_PONAB</name>
<dbReference type="EMBL" id="CR859819">
    <property type="protein sequence ID" value="CAH91976.1"/>
    <property type="molecule type" value="mRNA"/>
</dbReference>
<dbReference type="RefSeq" id="NP_001126145.1">
    <property type="nucleotide sequence ID" value="NM_001132673.1"/>
</dbReference>
<dbReference type="RefSeq" id="XP_063583191.1">
    <property type="nucleotide sequence ID" value="XM_063727121.1"/>
</dbReference>
<dbReference type="FunCoup" id="Q5R8D4">
    <property type="interactions" value="10"/>
</dbReference>
<dbReference type="STRING" id="9601.ENSPPYP00000002947"/>
<dbReference type="Ensembl" id="ENSPPYT00000003050.3">
    <property type="protein sequence ID" value="ENSPPYP00000002947.3"/>
    <property type="gene ID" value="ENSPPYG00000002539.3"/>
</dbReference>
<dbReference type="GeneID" id="100173104"/>
<dbReference type="KEGG" id="pon:100173104"/>
<dbReference type="CTD" id="60370"/>
<dbReference type="eggNOG" id="ENOG502SBE0">
    <property type="taxonomic scope" value="Eukaryota"/>
</dbReference>
<dbReference type="GeneTree" id="ENSGT00510000049872"/>
<dbReference type="InParanoid" id="Q5R8D4"/>
<dbReference type="OMA" id="NWKKPGP"/>
<dbReference type="OrthoDB" id="9906905at2759"/>
<dbReference type="Proteomes" id="UP000001595">
    <property type="component" value="Chromosome 10"/>
</dbReference>
<dbReference type="GO" id="GO:0043410">
    <property type="term" value="P:positive regulation of MAPK cascade"/>
    <property type="evidence" value="ECO:0007669"/>
    <property type="project" value="Ensembl"/>
</dbReference>
<dbReference type="InterPro" id="IPR039579">
    <property type="entry name" value="AVPI1"/>
</dbReference>
<dbReference type="InterPro" id="IPR020282">
    <property type="entry name" value="Avpi1/C8orf4_dom"/>
</dbReference>
<dbReference type="PANTHER" id="PTHR14350">
    <property type="entry name" value="ARGININE VASOPRESSIN-INDUCED PROTEIN 1"/>
    <property type="match status" value="1"/>
</dbReference>
<dbReference type="Pfam" id="PF15063">
    <property type="entry name" value="TC1"/>
    <property type="match status" value="1"/>
</dbReference>
<accession>Q5R8D4</accession>
<protein>
    <recommendedName>
        <fullName>Arginine vasopressin-induced protein 1</fullName>
        <shortName>AVP-induced protein 1</shortName>
    </recommendedName>
</protein>
<evidence type="ECO:0000250" key="1"/>
<evidence type="ECO:0000256" key="2">
    <source>
        <dbReference type="SAM" id="MobiDB-lite"/>
    </source>
</evidence>
<reference key="1">
    <citation type="submission" date="2004-11" db="EMBL/GenBank/DDBJ databases">
        <authorList>
            <consortium name="The German cDNA consortium"/>
        </authorList>
    </citation>
    <scope>NUCLEOTIDE SEQUENCE [LARGE SCALE MRNA]</scope>
    <source>
        <tissue>Kidney</tissue>
    </source>
</reference>
<proteinExistence type="evidence at transcript level"/>
<sequence length="147" mass="16779">MGTPASVVSEPPPWQAPTEARGRKQASANIFQDAELLQIQGLFQRSGDQLAEERAQIIWECAGDHHVAEALKRLRRKRPPRQKPLGHSLHHCSRLRILEPHSPLADPQSATETASTEQYLHSRRKSARIRRNWKKPGPTSYLHQIRH</sequence>
<keyword id="KW-0131">Cell cycle</keyword>
<keyword id="KW-1185">Reference proteome</keyword>
<feature type="chain" id="PRO_0000282404" description="Arginine vasopressin-induced protein 1">
    <location>
        <begin position="1"/>
        <end position="147"/>
    </location>
</feature>
<feature type="region of interest" description="Disordered" evidence="2">
    <location>
        <begin position="1"/>
        <end position="27"/>
    </location>
</feature>
<feature type="region of interest" description="Disordered" evidence="2">
    <location>
        <begin position="99"/>
        <end position="147"/>
    </location>
</feature>
<feature type="compositionally biased region" description="Polar residues" evidence="2">
    <location>
        <begin position="108"/>
        <end position="119"/>
    </location>
</feature>
<feature type="compositionally biased region" description="Basic residues" evidence="2">
    <location>
        <begin position="121"/>
        <end position="134"/>
    </location>
</feature>
<organism>
    <name type="scientific">Pongo abelii</name>
    <name type="common">Sumatran orangutan</name>
    <name type="synonym">Pongo pygmaeus abelii</name>
    <dbReference type="NCBI Taxonomy" id="9601"/>
    <lineage>
        <taxon>Eukaryota</taxon>
        <taxon>Metazoa</taxon>
        <taxon>Chordata</taxon>
        <taxon>Craniata</taxon>
        <taxon>Vertebrata</taxon>
        <taxon>Euteleostomi</taxon>
        <taxon>Mammalia</taxon>
        <taxon>Eutheria</taxon>
        <taxon>Euarchontoglires</taxon>
        <taxon>Primates</taxon>
        <taxon>Haplorrhini</taxon>
        <taxon>Catarrhini</taxon>
        <taxon>Hominidae</taxon>
        <taxon>Pongo</taxon>
    </lineage>
</organism>
<comment type="function">
    <text evidence="1">May be involved in MAP kinase activation, epithelial sodium channel (ENaC) down-regulation and cell cycling.</text>
</comment>
<gene>
    <name type="primary">AVPI1</name>
</gene>